<name>LPT_ESCF3</name>
<keyword id="KW-0028">Amino-acid biosynthesis</keyword>
<keyword id="KW-0428">Leader peptide</keyword>
<keyword id="KW-0791">Threonine biosynthesis</keyword>
<evidence type="ECO:0000255" key="1">
    <source>
        <dbReference type="HAMAP-Rule" id="MF_01907"/>
    </source>
</evidence>
<feature type="peptide" id="PRO_1000188779" description="thr operon leader peptide">
    <location>
        <begin position="1"/>
        <end position="21"/>
    </location>
</feature>
<dbReference type="EMBL" id="CU928158">
    <property type="protein sequence ID" value="CAU95880.1"/>
    <property type="molecule type" value="Genomic_DNA"/>
</dbReference>
<dbReference type="RefSeq" id="WP_001386572.1">
    <property type="nucleotide sequence ID" value="NC_011740.1"/>
</dbReference>
<dbReference type="GeneID" id="93777441"/>
<dbReference type="KEGG" id="efe:EFER_4502"/>
<dbReference type="HOGENOM" id="CLU_221491_0_1_6"/>
<dbReference type="Proteomes" id="UP000000745">
    <property type="component" value="Chromosome"/>
</dbReference>
<dbReference type="GO" id="GO:0009088">
    <property type="term" value="P:threonine biosynthetic process"/>
    <property type="evidence" value="ECO:0007669"/>
    <property type="project" value="UniProtKB-UniRule"/>
</dbReference>
<dbReference type="GO" id="GO:0031556">
    <property type="term" value="P:transcriptional attenuation by ribosome"/>
    <property type="evidence" value="ECO:0007669"/>
    <property type="project" value="UniProtKB-UniRule"/>
</dbReference>
<dbReference type="HAMAP" id="MF_01907">
    <property type="entry name" value="Leader_Thr"/>
    <property type="match status" value="1"/>
</dbReference>
<dbReference type="InterPro" id="IPR011720">
    <property type="entry name" value="Thr_lead_pept"/>
</dbReference>
<dbReference type="NCBIfam" id="NF007329">
    <property type="entry name" value="PRK09816.1"/>
    <property type="match status" value="1"/>
</dbReference>
<dbReference type="NCBIfam" id="TIGR02077">
    <property type="entry name" value="thr_lead_pep"/>
    <property type="match status" value="1"/>
</dbReference>
<dbReference type="Pfam" id="PF08254">
    <property type="entry name" value="Leader_Thr"/>
    <property type="match status" value="1"/>
</dbReference>
<sequence>MKRISTTITTTITITTGNGAG</sequence>
<gene>
    <name evidence="1" type="primary">thrL</name>
    <name type="ordered locus">EFER_4502</name>
</gene>
<comment type="function">
    <text evidence="1">This protein is involved in control of the biosynthesis of threonine.</text>
</comment>
<comment type="similarity">
    <text evidence="1">Belongs to the thr operon leader peptide family.</text>
</comment>
<protein>
    <recommendedName>
        <fullName evidence="1">thr operon leader peptide</fullName>
    </recommendedName>
    <alternativeName>
        <fullName evidence="1">thr operon attenuator</fullName>
    </alternativeName>
</protein>
<proteinExistence type="inferred from homology"/>
<organism>
    <name type="scientific">Escherichia fergusonii (strain ATCC 35469 / DSM 13698 / CCUG 18766 / IAM 14443 / JCM 21226 / LMG 7866 / NBRC 102419 / NCTC 12128 / CDC 0568-73)</name>
    <dbReference type="NCBI Taxonomy" id="585054"/>
    <lineage>
        <taxon>Bacteria</taxon>
        <taxon>Pseudomonadati</taxon>
        <taxon>Pseudomonadota</taxon>
        <taxon>Gammaproteobacteria</taxon>
        <taxon>Enterobacterales</taxon>
        <taxon>Enterobacteriaceae</taxon>
        <taxon>Escherichia</taxon>
    </lineage>
</organism>
<accession>B7LVR1</accession>
<reference key="1">
    <citation type="journal article" date="2009" name="PLoS Genet.">
        <title>Organised genome dynamics in the Escherichia coli species results in highly diverse adaptive paths.</title>
        <authorList>
            <person name="Touchon M."/>
            <person name="Hoede C."/>
            <person name="Tenaillon O."/>
            <person name="Barbe V."/>
            <person name="Baeriswyl S."/>
            <person name="Bidet P."/>
            <person name="Bingen E."/>
            <person name="Bonacorsi S."/>
            <person name="Bouchier C."/>
            <person name="Bouvet O."/>
            <person name="Calteau A."/>
            <person name="Chiapello H."/>
            <person name="Clermont O."/>
            <person name="Cruveiller S."/>
            <person name="Danchin A."/>
            <person name="Diard M."/>
            <person name="Dossat C."/>
            <person name="Karoui M.E."/>
            <person name="Frapy E."/>
            <person name="Garry L."/>
            <person name="Ghigo J.M."/>
            <person name="Gilles A.M."/>
            <person name="Johnson J."/>
            <person name="Le Bouguenec C."/>
            <person name="Lescat M."/>
            <person name="Mangenot S."/>
            <person name="Martinez-Jehanne V."/>
            <person name="Matic I."/>
            <person name="Nassif X."/>
            <person name="Oztas S."/>
            <person name="Petit M.A."/>
            <person name="Pichon C."/>
            <person name="Rouy Z."/>
            <person name="Ruf C.S."/>
            <person name="Schneider D."/>
            <person name="Tourret J."/>
            <person name="Vacherie B."/>
            <person name="Vallenet D."/>
            <person name="Medigue C."/>
            <person name="Rocha E.P.C."/>
            <person name="Denamur E."/>
        </authorList>
    </citation>
    <scope>NUCLEOTIDE SEQUENCE [LARGE SCALE GENOMIC DNA]</scope>
    <source>
        <strain>ATCC 35469 / DSM 13698 / BCRC 15582 / CCUG 18766 / IAM 14443 / JCM 21226 / LMG 7866 / NBRC 102419 / NCTC 12128 / CDC 0568-73</strain>
    </source>
</reference>